<feature type="chain" id="PRO_0000083355" description="Transcription factor IWS1">
    <location>
        <begin position="1"/>
        <end position="400"/>
    </location>
</feature>
<feature type="domain" description="TFIIS N-terminal" evidence="2">
    <location>
        <begin position="211"/>
        <end position="288"/>
    </location>
</feature>
<feature type="region of interest" description="Disordered" evidence="3">
    <location>
        <begin position="1"/>
        <end position="50"/>
    </location>
</feature>
<feature type="region of interest" description="Disordered" evidence="3">
    <location>
        <begin position="77"/>
        <end position="149"/>
    </location>
</feature>
<feature type="region of interest" description="Disordered" evidence="3">
    <location>
        <begin position="375"/>
        <end position="400"/>
    </location>
</feature>
<feature type="compositionally biased region" description="Low complexity" evidence="3">
    <location>
        <begin position="19"/>
        <end position="34"/>
    </location>
</feature>
<feature type="compositionally biased region" description="Polar residues" evidence="3">
    <location>
        <begin position="84"/>
        <end position="99"/>
    </location>
</feature>
<feature type="compositionally biased region" description="Basic and acidic residues" evidence="3">
    <location>
        <begin position="119"/>
        <end position="130"/>
    </location>
</feature>
<accession>Q5AAR0</accession>
<accession>A0A1D8PDV4</accession>
<protein>
    <recommendedName>
        <fullName>Transcription factor IWS1</fullName>
    </recommendedName>
</protein>
<reference key="1">
    <citation type="journal article" date="2004" name="Proc. Natl. Acad. Sci. U.S.A.">
        <title>The diploid genome sequence of Candida albicans.</title>
        <authorList>
            <person name="Jones T."/>
            <person name="Federspiel N.A."/>
            <person name="Chibana H."/>
            <person name="Dungan J."/>
            <person name="Kalman S."/>
            <person name="Magee B.B."/>
            <person name="Newport G."/>
            <person name="Thorstenson Y.R."/>
            <person name="Agabian N."/>
            <person name="Magee P.T."/>
            <person name="Davis R.W."/>
            <person name="Scherer S."/>
        </authorList>
    </citation>
    <scope>NUCLEOTIDE SEQUENCE [LARGE SCALE GENOMIC DNA]</scope>
    <source>
        <strain>SC5314 / ATCC MYA-2876</strain>
    </source>
</reference>
<reference key="2">
    <citation type="journal article" date="2007" name="Genome Biol.">
        <title>Assembly of the Candida albicans genome into sixteen supercontigs aligned on the eight chromosomes.</title>
        <authorList>
            <person name="van het Hoog M."/>
            <person name="Rast T.J."/>
            <person name="Martchenko M."/>
            <person name="Grindle S."/>
            <person name="Dignard D."/>
            <person name="Hogues H."/>
            <person name="Cuomo C."/>
            <person name="Berriman M."/>
            <person name="Scherer S."/>
            <person name="Magee B.B."/>
            <person name="Whiteway M."/>
            <person name="Chibana H."/>
            <person name="Nantel A."/>
            <person name="Magee P.T."/>
        </authorList>
    </citation>
    <scope>GENOME REANNOTATION</scope>
    <source>
        <strain>SC5314 / ATCC MYA-2876</strain>
    </source>
</reference>
<reference key="3">
    <citation type="journal article" date="2013" name="Genome Biol.">
        <title>Assembly of a phased diploid Candida albicans genome facilitates allele-specific measurements and provides a simple model for repeat and indel structure.</title>
        <authorList>
            <person name="Muzzey D."/>
            <person name="Schwartz K."/>
            <person name="Weissman J.S."/>
            <person name="Sherlock G."/>
        </authorList>
    </citation>
    <scope>NUCLEOTIDE SEQUENCE [LARGE SCALE GENOMIC DNA]</scope>
    <scope>GENOME REANNOTATION</scope>
    <source>
        <strain>SC5314 / ATCC MYA-2876</strain>
    </source>
</reference>
<keyword id="KW-0539">Nucleus</keyword>
<keyword id="KW-1185">Reference proteome</keyword>
<keyword id="KW-0804">Transcription</keyword>
<keyword id="KW-0805">Transcription regulation</keyword>
<comment type="function">
    <text evidence="1">Transcription factor involved in RNA polymerase II transcription regulation. May function in both SPT15/TBP post-recruitment and recruitment steps of transcription (By similarity).</text>
</comment>
<comment type="subcellular location">
    <subcellularLocation>
        <location evidence="2">Nucleus</location>
    </subcellularLocation>
</comment>
<comment type="similarity">
    <text evidence="4">Belongs to the IWS1 family.</text>
</comment>
<sequence length="400" mass="45797">MSDPLADYTNLSHDEIDPSSANAAESEQAEPEQQVSEHYEPQPEELTYENDENVLNSIKVQKITDAEAIGEVVRKKVIRDSRPQGYQQDDFNDNSNVTLGSRPGHQQTDEIDISSMDPQQRKRFELEERMSAAIKPSNKRRRKADEDDLERMQDDKIDYLKDQMIKAANSDVEKNSQGQIATEKLKLLKEVSDILARADLAIPILDNNLLEAVRLWLEPLPDASMPAYQIQKELIHALETLPIKTDHLVASGIGKVLVFYQRSKRTEPSLKKIVDRLIGDWTRPILNKSDSYKDRTVQFHEYNRNKFTNKLSRGVKKREAKTLYEENAERRKRAAIPSTRTTAYKIAPQVDKSLLMRQQSRHASNDERFKRINSKLTSMSVKRKAAKKGGPSIEGRDLAM</sequence>
<name>IWS1_CANAL</name>
<gene>
    <name type="primary">IWS1</name>
    <name type="ordered locus">CAALFM_C106590CA</name>
    <name type="ORF">CaO19.13630</name>
    <name type="ORF">CaO19.6252</name>
</gene>
<proteinExistence type="inferred from homology"/>
<organism>
    <name type="scientific">Candida albicans (strain SC5314 / ATCC MYA-2876)</name>
    <name type="common">Yeast</name>
    <dbReference type="NCBI Taxonomy" id="237561"/>
    <lineage>
        <taxon>Eukaryota</taxon>
        <taxon>Fungi</taxon>
        <taxon>Dikarya</taxon>
        <taxon>Ascomycota</taxon>
        <taxon>Saccharomycotina</taxon>
        <taxon>Pichiomycetes</taxon>
        <taxon>Debaryomycetaceae</taxon>
        <taxon>Candida/Lodderomyces clade</taxon>
        <taxon>Candida</taxon>
    </lineage>
</organism>
<dbReference type="EMBL" id="CP017623">
    <property type="protein sequence ID" value="AOW26315.1"/>
    <property type="molecule type" value="Genomic_DNA"/>
</dbReference>
<dbReference type="RefSeq" id="XP_718840.2">
    <property type="nucleotide sequence ID" value="XM_713747.2"/>
</dbReference>
<dbReference type="SMR" id="Q5AAR0"/>
<dbReference type="FunCoup" id="Q5AAR0">
    <property type="interactions" value="377"/>
</dbReference>
<dbReference type="STRING" id="237561.Q5AAR0"/>
<dbReference type="EnsemblFungi" id="C1_06590C_A-T">
    <property type="protein sequence ID" value="C1_06590C_A-T-p1"/>
    <property type="gene ID" value="C1_06590C_A"/>
</dbReference>
<dbReference type="GeneID" id="3639514"/>
<dbReference type="KEGG" id="cal:CAALFM_C106590CA"/>
<dbReference type="CGD" id="CAL0000188700">
    <property type="gene designation" value="orf19.13630"/>
</dbReference>
<dbReference type="VEuPathDB" id="FungiDB:C1_06590C_A"/>
<dbReference type="eggNOG" id="KOG1793">
    <property type="taxonomic scope" value="Eukaryota"/>
</dbReference>
<dbReference type="HOGENOM" id="CLU_045275_0_1_1"/>
<dbReference type="InParanoid" id="Q5AAR0"/>
<dbReference type="OMA" id="MPAYNIQ"/>
<dbReference type="OrthoDB" id="21124at2759"/>
<dbReference type="PRO" id="PR:Q5AAR0"/>
<dbReference type="Proteomes" id="UP000000559">
    <property type="component" value="Chromosome 1"/>
</dbReference>
<dbReference type="GO" id="GO:0005634">
    <property type="term" value="C:nucleus"/>
    <property type="evidence" value="ECO:0000318"/>
    <property type="project" value="GO_Central"/>
</dbReference>
<dbReference type="GO" id="GO:0016973">
    <property type="term" value="P:poly(A)+ mRNA export from nucleus"/>
    <property type="evidence" value="ECO:0000318"/>
    <property type="project" value="GO_Central"/>
</dbReference>
<dbReference type="FunFam" id="1.20.930.10:FF:000003">
    <property type="entry name" value="Putative Transcription factor IWS1"/>
    <property type="match status" value="1"/>
</dbReference>
<dbReference type="Gene3D" id="1.20.930.10">
    <property type="entry name" value="Conserved domain common to transcription factors TFIIS, elongin A, CRSP70"/>
    <property type="match status" value="1"/>
</dbReference>
<dbReference type="InterPro" id="IPR051037">
    <property type="entry name" value="RNAPII_TF_IWS1"/>
</dbReference>
<dbReference type="InterPro" id="IPR035441">
    <property type="entry name" value="TFIIS/LEDGF_dom_sf"/>
</dbReference>
<dbReference type="InterPro" id="IPR017923">
    <property type="entry name" value="TFIIS_N"/>
</dbReference>
<dbReference type="PANTHER" id="PTHR46010">
    <property type="entry name" value="PROTEIN IWS1 HOMOLOG"/>
    <property type="match status" value="1"/>
</dbReference>
<dbReference type="PANTHER" id="PTHR46010:SF1">
    <property type="entry name" value="PROTEIN IWS1 HOMOLOG"/>
    <property type="match status" value="1"/>
</dbReference>
<dbReference type="Pfam" id="PF08711">
    <property type="entry name" value="Med26"/>
    <property type="match status" value="1"/>
</dbReference>
<dbReference type="PROSITE" id="PS51319">
    <property type="entry name" value="TFIIS_N"/>
    <property type="match status" value="1"/>
</dbReference>
<evidence type="ECO:0000250" key="1"/>
<evidence type="ECO:0000255" key="2">
    <source>
        <dbReference type="PROSITE-ProRule" id="PRU00649"/>
    </source>
</evidence>
<evidence type="ECO:0000256" key="3">
    <source>
        <dbReference type="SAM" id="MobiDB-lite"/>
    </source>
</evidence>
<evidence type="ECO:0000305" key="4"/>